<evidence type="ECO:0000255" key="1">
    <source>
        <dbReference type="HAMAP-Rule" id="MF_02007"/>
    </source>
</evidence>
<protein>
    <recommendedName>
        <fullName evidence="1">Tyrosine--tRNA ligase</fullName>
        <ecNumber evidence="1">6.1.1.1</ecNumber>
    </recommendedName>
    <alternativeName>
        <fullName evidence="1">Tyrosyl-tRNA synthetase</fullName>
        <shortName evidence="1">TyrRS</shortName>
    </alternativeName>
</protein>
<comment type="function">
    <text evidence="1">Catalyzes the attachment of tyrosine to tRNA(Tyr) in a two-step reaction: tyrosine is first activated by ATP to form Tyr-AMP and then transferred to the acceptor end of tRNA(Tyr).</text>
</comment>
<comment type="catalytic activity">
    <reaction evidence="1">
        <text>tRNA(Tyr) + L-tyrosine + ATP = L-tyrosyl-tRNA(Tyr) + AMP + diphosphate + H(+)</text>
        <dbReference type="Rhea" id="RHEA:10220"/>
        <dbReference type="Rhea" id="RHEA-COMP:9706"/>
        <dbReference type="Rhea" id="RHEA-COMP:9707"/>
        <dbReference type="ChEBI" id="CHEBI:15378"/>
        <dbReference type="ChEBI" id="CHEBI:30616"/>
        <dbReference type="ChEBI" id="CHEBI:33019"/>
        <dbReference type="ChEBI" id="CHEBI:58315"/>
        <dbReference type="ChEBI" id="CHEBI:78442"/>
        <dbReference type="ChEBI" id="CHEBI:78536"/>
        <dbReference type="ChEBI" id="CHEBI:456215"/>
        <dbReference type="EC" id="6.1.1.1"/>
    </reaction>
</comment>
<comment type="subunit">
    <text evidence="1">Homodimer.</text>
</comment>
<comment type="subcellular location">
    <subcellularLocation>
        <location evidence="1">Cytoplasm</location>
    </subcellularLocation>
</comment>
<comment type="similarity">
    <text evidence="1">Belongs to the class-I aminoacyl-tRNA synthetase family. TyrS type 2 subfamily.</text>
</comment>
<proteinExistence type="inferred from homology"/>
<sequence length="404" mass="44851">MSNFLPAEEQLALIQRGTHEIISEEDLLKKLKENRPLRIKAGFDPTAPDLHLGHTVLINKLKAFQDLGHEVTFLIGDYTAMIGDPTGKSATRPPLTREQVEANAKTYQEQVFKILDPNKTKVRFNSEWFNQRTAADLIQLASQQTVSRMLERDDFTKRYNNHQPIAIHEFLYPLVQGYDSIALEADVELGGTDQTFNLLMGRTLQGRYGQESQVCITVPILEGLDGVNKMSKSLGNYIGVFDAPGAMYQKVLSMPDTLIERYFELLSFKSLDEIQGLLDEMANGRNPQDLKKILALELVERFHDADAAANAHKGAGNIITEGEIPEGTPEVTISRGEFGGEIFIASIVRLAGLTKNAAQAKDAVSRGAVKVDWQVVDANFSVKENKTYLIQAGKKAIAQVTFTD</sequence>
<gene>
    <name evidence="1" type="primary">tyrS</name>
    <name type="ordered locus">ACIAD0013</name>
</gene>
<feature type="chain" id="PRO_0000236688" description="Tyrosine--tRNA ligase">
    <location>
        <begin position="1"/>
        <end position="404"/>
    </location>
</feature>
<feature type="domain" description="S4 RNA-binding" evidence="1">
    <location>
        <begin position="342"/>
        <end position="402"/>
    </location>
</feature>
<feature type="short sequence motif" description="'HIGH' region">
    <location>
        <begin position="45"/>
        <end position="54"/>
    </location>
</feature>
<feature type="short sequence motif" description="'KMSKS' region">
    <location>
        <begin position="229"/>
        <end position="233"/>
    </location>
</feature>
<feature type="binding site" evidence="1">
    <location>
        <position position="232"/>
    </location>
    <ligand>
        <name>ATP</name>
        <dbReference type="ChEBI" id="CHEBI:30616"/>
    </ligand>
</feature>
<name>SYY_ACIAD</name>
<organism>
    <name type="scientific">Acinetobacter baylyi (strain ATCC 33305 / BD413 / ADP1)</name>
    <dbReference type="NCBI Taxonomy" id="62977"/>
    <lineage>
        <taxon>Bacteria</taxon>
        <taxon>Pseudomonadati</taxon>
        <taxon>Pseudomonadota</taxon>
        <taxon>Gammaproteobacteria</taxon>
        <taxon>Moraxellales</taxon>
        <taxon>Moraxellaceae</taxon>
        <taxon>Acinetobacter</taxon>
    </lineage>
</organism>
<accession>Q6FG10</accession>
<keyword id="KW-0030">Aminoacyl-tRNA synthetase</keyword>
<keyword id="KW-0067">ATP-binding</keyword>
<keyword id="KW-0963">Cytoplasm</keyword>
<keyword id="KW-0436">Ligase</keyword>
<keyword id="KW-0547">Nucleotide-binding</keyword>
<keyword id="KW-0648">Protein biosynthesis</keyword>
<keyword id="KW-0694">RNA-binding</keyword>
<dbReference type="EC" id="6.1.1.1" evidence="1"/>
<dbReference type="EMBL" id="CR543861">
    <property type="protein sequence ID" value="CAG66997.1"/>
    <property type="molecule type" value="Genomic_DNA"/>
</dbReference>
<dbReference type="SMR" id="Q6FG10"/>
<dbReference type="STRING" id="202950.GCA_001485005_03166"/>
<dbReference type="KEGG" id="aci:ACIAD0013"/>
<dbReference type="eggNOG" id="COG0162">
    <property type="taxonomic scope" value="Bacteria"/>
</dbReference>
<dbReference type="HOGENOM" id="CLU_024003_5_0_6"/>
<dbReference type="OrthoDB" id="9804243at2"/>
<dbReference type="BioCyc" id="ASP62977:ACIAD_RS00055-MONOMER"/>
<dbReference type="Proteomes" id="UP000000430">
    <property type="component" value="Chromosome"/>
</dbReference>
<dbReference type="GO" id="GO:0005829">
    <property type="term" value="C:cytosol"/>
    <property type="evidence" value="ECO:0007669"/>
    <property type="project" value="TreeGrafter"/>
</dbReference>
<dbReference type="GO" id="GO:0005524">
    <property type="term" value="F:ATP binding"/>
    <property type="evidence" value="ECO:0007669"/>
    <property type="project" value="UniProtKB-UniRule"/>
</dbReference>
<dbReference type="GO" id="GO:0003723">
    <property type="term" value="F:RNA binding"/>
    <property type="evidence" value="ECO:0007669"/>
    <property type="project" value="UniProtKB-KW"/>
</dbReference>
<dbReference type="GO" id="GO:0004831">
    <property type="term" value="F:tyrosine-tRNA ligase activity"/>
    <property type="evidence" value="ECO:0007669"/>
    <property type="project" value="UniProtKB-UniRule"/>
</dbReference>
<dbReference type="GO" id="GO:0006437">
    <property type="term" value="P:tyrosyl-tRNA aminoacylation"/>
    <property type="evidence" value="ECO:0007669"/>
    <property type="project" value="UniProtKB-UniRule"/>
</dbReference>
<dbReference type="CDD" id="cd00805">
    <property type="entry name" value="TyrRS_core"/>
    <property type="match status" value="1"/>
</dbReference>
<dbReference type="FunFam" id="3.40.50.620:FF:000061">
    <property type="entry name" value="Tyrosine--tRNA ligase"/>
    <property type="match status" value="1"/>
</dbReference>
<dbReference type="Gene3D" id="3.40.50.620">
    <property type="entry name" value="HUPs"/>
    <property type="match status" value="1"/>
</dbReference>
<dbReference type="Gene3D" id="3.10.290.10">
    <property type="entry name" value="RNA-binding S4 domain"/>
    <property type="match status" value="1"/>
</dbReference>
<dbReference type="Gene3D" id="1.10.240.10">
    <property type="entry name" value="Tyrosyl-Transfer RNA Synthetase"/>
    <property type="match status" value="1"/>
</dbReference>
<dbReference type="HAMAP" id="MF_02007">
    <property type="entry name" value="Tyr_tRNA_synth_type2"/>
    <property type="match status" value="1"/>
</dbReference>
<dbReference type="InterPro" id="IPR001412">
    <property type="entry name" value="aa-tRNA-synth_I_CS"/>
</dbReference>
<dbReference type="InterPro" id="IPR002305">
    <property type="entry name" value="aa-tRNA-synth_Ic"/>
</dbReference>
<dbReference type="InterPro" id="IPR014729">
    <property type="entry name" value="Rossmann-like_a/b/a_fold"/>
</dbReference>
<dbReference type="InterPro" id="IPR036986">
    <property type="entry name" value="S4_RNA-bd_sf"/>
</dbReference>
<dbReference type="InterPro" id="IPR002307">
    <property type="entry name" value="Tyr-tRNA-ligase"/>
</dbReference>
<dbReference type="InterPro" id="IPR024088">
    <property type="entry name" value="Tyr-tRNA-ligase_bac-type"/>
</dbReference>
<dbReference type="InterPro" id="IPR024108">
    <property type="entry name" value="Tyr-tRNA-ligase_bac_2"/>
</dbReference>
<dbReference type="NCBIfam" id="TIGR00234">
    <property type="entry name" value="tyrS"/>
    <property type="match status" value="1"/>
</dbReference>
<dbReference type="PANTHER" id="PTHR11766:SF1">
    <property type="entry name" value="TYROSINE--TRNA LIGASE"/>
    <property type="match status" value="1"/>
</dbReference>
<dbReference type="PANTHER" id="PTHR11766">
    <property type="entry name" value="TYROSYL-TRNA SYNTHETASE"/>
    <property type="match status" value="1"/>
</dbReference>
<dbReference type="Pfam" id="PF00579">
    <property type="entry name" value="tRNA-synt_1b"/>
    <property type="match status" value="1"/>
</dbReference>
<dbReference type="PRINTS" id="PR01040">
    <property type="entry name" value="TRNASYNTHTYR"/>
</dbReference>
<dbReference type="SUPFAM" id="SSF55174">
    <property type="entry name" value="Alpha-L RNA-binding motif"/>
    <property type="match status" value="1"/>
</dbReference>
<dbReference type="SUPFAM" id="SSF52374">
    <property type="entry name" value="Nucleotidylyl transferase"/>
    <property type="match status" value="1"/>
</dbReference>
<dbReference type="PROSITE" id="PS00178">
    <property type="entry name" value="AA_TRNA_LIGASE_I"/>
    <property type="match status" value="1"/>
</dbReference>
<dbReference type="PROSITE" id="PS50889">
    <property type="entry name" value="S4"/>
    <property type="match status" value="1"/>
</dbReference>
<reference key="1">
    <citation type="journal article" date="2004" name="Nucleic Acids Res.">
        <title>Unique features revealed by the genome sequence of Acinetobacter sp. ADP1, a versatile and naturally transformation competent bacterium.</title>
        <authorList>
            <person name="Barbe V."/>
            <person name="Vallenet D."/>
            <person name="Fonknechten N."/>
            <person name="Kreimeyer A."/>
            <person name="Oztas S."/>
            <person name="Labarre L."/>
            <person name="Cruveiller S."/>
            <person name="Robert C."/>
            <person name="Duprat S."/>
            <person name="Wincker P."/>
            <person name="Ornston L.N."/>
            <person name="Weissenbach J."/>
            <person name="Marliere P."/>
            <person name="Cohen G.N."/>
            <person name="Medigue C."/>
        </authorList>
    </citation>
    <scope>NUCLEOTIDE SEQUENCE [LARGE SCALE GENOMIC DNA]</scope>
    <source>
        <strain>ATCC 33305 / BD413 / ADP1</strain>
    </source>
</reference>